<gene>
    <name type="primary">yvyC</name>
    <name type="synonym">yviH</name>
    <name type="ordered locus">BSU35350</name>
</gene>
<sequence length="109" mass="13025">MNIERLTTLQPVWDRYDTQIHNQKDNDNEVPVHQVSYTNLAEMVGEMNKLLEPSQVHLKFELHDKLNEYYVKVIEDSTNEVIREIPPKRWLDFYAAMTEFLGLFVDEKK</sequence>
<keyword id="KW-0002">3D-structure</keyword>
<keyword id="KW-1185">Reference proteome</keyword>
<dbReference type="EMBL" id="Z31376">
    <property type="protein sequence ID" value="CAA83247.1"/>
    <property type="molecule type" value="Genomic_DNA"/>
</dbReference>
<dbReference type="EMBL" id="M26948">
    <property type="status" value="NOT_ANNOTATED_CDS"/>
    <property type="molecule type" value="Genomic_DNA"/>
</dbReference>
<dbReference type="EMBL" id="U56901">
    <property type="protein sequence ID" value="AAC44952.1"/>
    <property type="molecule type" value="Genomic_DNA"/>
</dbReference>
<dbReference type="EMBL" id="AL009126">
    <property type="protein sequence ID" value="CAB15552.1"/>
    <property type="molecule type" value="Genomic_DNA"/>
</dbReference>
<dbReference type="PIR" id="I40396">
    <property type="entry name" value="I40396"/>
</dbReference>
<dbReference type="RefSeq" id="NP_391415.1">
    <property type="nucleotide sequence ID" value="NC_000964.3"/>
</dbReference>
<dbReference type="PDB" id="2HC5">
    <property type="method" value="NMR"/>
    <property type="chains" value="A=2-109"/>
</dbReference>
<dbReference type="PDBsum" id="2HC5"/>
<dbReference type="BMRB" id="P39737"/>
<dbReference type="SMR" id="P39737"/>
<dbReference type="FunCoup" id="P39737">
    <property type="interactions" value="72"/>
</dbReference>
<dbReference type="STRING" id="224308.BSU35350"/>
<dbReference type="jPOST" id="P39737"/>
<dbReference type="PaxDb" id="224308-BSU35350"/>
<dbReference type="EnsemblBacteria" id="CAB15552">
    <property type="protein sequence ID" value="CAB15552"/>
    <property type="gene ID" value="BSU_35350"/>
</dbReference>
<dbReference type="GeneID" id="936737"/>
<dbReference type="KEGG" id="bsu:BSU35350"/>
<dbReference type="PATRIC" id="fig|224308.179.peg.3826"/>
<dbReference type="eggNOG" id="COG1334">
    <property type="taxonomic scope" value="Bacteria"/>
</dbReference>
<dbReference type="InParanoid" id="P39737"/>
<dbReference type="OrthoDB" id="9799867at2"/>
<dbReference type="BioCyc" id="BSUB:BSU35350-MONOMER"/>
<dbReference type="EvolutionaryTrace" id="P39737"/>
<dbReference type="Proteomes" id="UP000001570">
    <property type="component" value="Chromosome"/>
</dbReference>
<dbReference type="Gene3D" id="3.30.160.170">
    <property type="entry name" value="FlaG-like"/>
    <property type="match status" value="1"/>
</dbReference>
<dbReference type="InterPro" id="IPR005186">
    <property type="entry name" value="FlaG"/>
</dbReference>
<dbReference type="InterPro" id="IPR035924">
    <property type="entry name" value="FlaG-like_sf"/>
</dbReference>
<dbReference type="NCBIfam" id="NF005834">
    <property type="entry name" value="PRK07738.1"/>
    <property type="match status" value="1"/>
</dbReference>
<dbReference type="PANTHER" id="PTHR37166">
    <property type="entry name" value="PROTEIN FLAG"/>
    <property type="match status" value="1"/>
</dbReference>
<dbReference type="PANTHER" id="PTHR37166:SF1">
    <property type="entry name" value="PROTEIN FLAG"/>
    <property type="match status" value="1"/>
</dbReference>
<dbReference type="Pfam" id="PF03646">
    <property type="entry name" value="FlaG"/>
    <property type="match status" value="1"/>
</dbReference>
<dbReference type="SUPFAM" id="SSF160214">
    <property type="entry name" value="FlaG-like"/>
    <property type="match status" value="1"/>
</dbReference>
<organism>
    <name type="scientific">Bacillus subtilis (strain 168)</name>
    <dbReference type="NCBI Taxonomy" id="224308"/>
    <lineage>
        <taxon>Bacteria</taxon>
        <taxon>Bacillati</taxon>
        <taxon>Bacillota</taxon>
        <taxon>Bacilli</taxon>
        <taxon>Bacillales</taxon>
        <taxon>Bacillaceae</taxon>
        <taxon>Bacillus</taxon>
    </lineage>
</organism>
<evidence type="ECO:0007829" key="1">
    <source>
        <dbReference type="PDB" id="2HC5"/>
    </source>
</evidence>
<feature type="chain" id="PRO_0000049946" description="Uncharacterized protein YvyC">
    <location>
        <begin position="1"/>
        <end position="109"/>
    </location>
</feature>
<feature type="helix" evidence="1">
    <location>
        <begin position="10"/>
        <end position="21"/>
    </location>
</feature>
<feature type="helix" evidence="1">
    <location>
        <begin position="37"/>
        <end position="51"/>
    </location>
</feature>
<feature type="strand" evidence="1">
    <location>
        <begin position="58"/>
        <end position="65"/>
    </location>
</feature>
<feature type="strand" evidence="1">
    <location>
        <begin position="68"/>
        <end position="75"/>
    </location>
</feature>
<feature type="turn" evidence="1">
    <location>
        <begin position="76"/>
        <end position="78"/>
    </location>
</feature>
<feature type="strand" evidence="1">
    <location>
        <begin position="80"/>
        <end position="85"/>
    </location>
</feature>
<feature type="helix" evidence="1">
    <location>
        <begin position="87"/>
        <end position="104"/>
    </location>
</feature>
<feature type="turn" evidence="1">
    <location>
        <begin position="107"/>
        <end position="109"/>
    </location>
</feature>
<proteinExistence type="evidence at protein level"/>
<reference key="1">
    <citation type="journal article" date="1994" name="J. Bacteriol.">
        <title>The Bacillus subtilis sigma D-dependent operon encoding the flagellar proteins FliD, FliS, and FliT.</title>
        <authorList>
            <person name="Chen L."/>
            <person name="Helmann J.D."/>
        </authorList>
    </citation>
    <scope>NUCLEOTIDE SEQUENCE [GENOMIC DNA]</scope>
    <source>
        <strain>168 / HB2058</strain>
    </source>
</reference>
<reference key="2">
    <citation type="journal article" date="1989" name="J. Bacteriol.">
        <title>The Bacillus subtilis flagellin gene (hag) is transcribed by the sigma 28 form of RNA polymerase.</title>
        <authorList>
            <person name="Mirel D.B."/>
            <person name="Chamberlin M.J."/>
        </authorList>
    </citation>
    <scope>NUCLEOTIDE SEQUENCE [GENOMIC DNA]</scope>
</reference>
<reference key="3">
    <citation type="journal article" date="1996" name="Microbiology">
        <title>Sequence of the 305 degrees-307 degrees region of the Bacillus subtilis chromosome.</title>
        <authorList>
            <person name="Soldo B."/>
            <person name="Lazarevic V."/>
            <person name="Mauel C."/>
            <person name="Karamata D."/>
        </authorList>
    </citation>
    <scope>NUCLEOTIDE SEQUENCE [GENOMIC DNA]</scope>
    <source>
        <strain>168</strain>
    </source>
</reference>
<reference key="4">
    <citation type="journal article" date="1997" name="Nature">
        <title>The complete genome sequence of the Gram-positive bacterium Bacillus subtilis.</title>
        <authorList>
            <person name="Kunst F."/>
            <person name="Ogasawara N."/>
            <person name="Moszer I."/>
            <person name="Albertini A.M."/>
            <person name="Alloni G."/>
            <person name="Azevedo V."/>
            <person name="Bertero M.G."/>
            <person name="Bessieres P."/>
            <person name="Bolotin A."/>
            <person name="Borchert S."/>
            <person name="Borriss R."/>
            <person name="Boursier L."/>
            <person name="Brans A."/>
            <person name="Braun M."/>
            <person name="Brignell S.C."/>
            <person name="Bron S."/>
            <person name="Brouillet S."/>
            <person name="Bruschi C.V."/>
            <person name="Caldwell B."/>
            <person name="Capuano V."/>
            <person name="Carter N.M."/>
            <person name="Choi S.-K."/>
            <person name="Codani J.-J."/>
            <person name="Connerton I.F."/>
            <person name="Cummings N.J."/>
            <person name="Daniel R.A."/>
            <person name="Denizot F."/>
            <person name="Devine K.M."/>
            <person name="Duesterhoeft A."/>
            <person name="Ehrlich S.D."/>
            <person name="Emmerson P.T."/>
            <person name="Entian K.-D."/>
            <person name="Errington J."/>
            <person name="Fabret C."/>
            <person name="Ferrari E."/>
            <person name="Foulger D."/>
            <person name="Fritz C."/>
            <person name="Fujita M."/>
            <person name="Fujita Y."/>
            <person name="Fuma S."/>
            <person name="Galizzi A."/>
            <person name="Galleron N."/>
            <person name="Ghim S.-Y."/>
            <person name="Glaser P."/>
            <person name="Goffeau A."/>
            <person name="Golightly E.J."/>
            <person name="Grandi G."/>
            <person name="Guiseppi G."/>
            <person name="Guy B.J."/>
            <person name="Haga K."/>
            <person name="Haiech J."/>
            <person name="Harwood C.R."/>
            <person name="Henaut A."/>
            <person name="Hilbert H."/>
            <person name="Holsappel S."/>
            <person name="Hosono S."/>
            <person name="Hullo M.-F."/>
            <person name="Itaya M."/>
            <person name="Jones L.-M."/>
            <person name="Joris B."/>
            <person name="Karamata D."/>
            <person name="Kasahara Y."/>
            <person name="Klaerr-Blanchard M."/>
            <person name="Klein C."/>
            <person name="Kobayashi Y."/>
            <person name="Koetter P."/>
            <person name="Koningstein G."/>
            <person name="Krogh S."/>
            <person name="Kumano M."/>
            <person name="Kurita K."/>
            <person name="Lapidus A."/>
            <person name="Lardinois S."/>
            <person name="Lauber J."/>
            <person name="Lazarevic V."/>
            <person name="Lee S.-M."/>
            <person name="Levine A."/>
            <person name="Liu H."/>
            <person name="Masuda S."/>
            <person name="Mauel C."/>
            <person name="Medigue C."/>
            <person name="Medina N."/>
            <person name="Mellado R.P."/>
            <person name="Mizuno M."/>
            <person name="Moestl D."/>
            <person name="Nakai S."/>
            <person name="Noback M."/>
            <person name="Noone D."/>
            <person name="O'Reilly M."/>
            <person name="Ogawa K."/>
            <person name="Ogiwara A."/>
            <person name="Oudega B."/>
            <person name="Park S.-H."/>
            <person name="Parro V."/>
            <person name="Pohl T.M."/>
            <person name="Portetelle D."/>
            <person name="Porwollik S."/>
            <person name="Prescott A.M."/>
            <person name="Presecan E."/>
            <person name="Pujic P."/>
            <person name="Purnelle B."/>
            <person name="Rapoport G."/>
            <person name="Rey M."/>
            <person name="Reynolds S."/>
            <person name="Rieger M."/>
            <person name="Rivolta C."/>
            <person name="Rocha E."/>
            <person name="Roche B."/>
            <person name="Rose M."/>
            <person name="Sadaie Y."/>
            <person name="Sato T."/>
            <person name="Scanlan E."/>
            <person name="Schleich S."/>
            <person name="Schroeter R."/>
            <person name="Scoffone F."/>
            <person name="Sekiguchi J."/>
            <person name="Sekowska A."/>
            <person name="Seror S.J."/>
            <person name="Serror P."/>
            <person name="Shin B.-S."/>
            <person name="Soldo B."/>
            <person name="Sorokin A."/>
            <person name="Tacconi E."/>
            <person name="Takagi T."/>
            <person name="Takahashi H."/>
            <person name="Takemaru K."/>
            <person name="Takeuchi M."/>
            <person name="Tamakoshi A."/>
            <person name="Tanaka T."/>
            <person name="Terpstra P."/>
            <person name="Tognoni A."/>
            <person name="Tosato V."/>
            <person name="Uchiyama S."/>
            <person name="Vandenbol M."/>
            <person name="Vannier F."/>
            <person name="Vassarotti A."/>
            <person name="Viari A."/>
            <person name="Wambutt R."/>
            <person name="Wedler E."/>
            <person name="Wedler H."/>
            <person name="Weitzenegger T."/>
            <person name="Winters P."/>
            <person name="Wipat A."/>
            <person name="Yamamoto H."/>
            <person name="Yamane K."/>
            <person name="Yasumoto K."/>
            <person name="Yata K."/>
            <person name="Yoshida K."/>
            <person name="Yoshikawa H.-F."/>
            <person name="Zumstein E."/>
            <person name="Yoshikawa H."/>
            <person name="Danchin A."/>
        </authorList>
    </citation>
    <scope>NUCLEOTIDE SEQUENCE [LARGE SCALE GENOMIC DNA]</scope>
    <source>
        <strain>168</strain>
    </source>
</reference>
<reference key="5">
    <citation type="journal article" date="2009" name="Proteins">
        <title>NMR structure of protein YvyC from Bacillus subtilis reveals unexpected structural similarity between two PFAM families.</title>
        <authorList>
            <person name="Eletsky A."/>
            <person name="Sukumaran D.K."/>
            <person name="Xiao R."/>
            <person name="Acton T.B."/>
            <person name="Rost B."/>
            <person name="Montelione G.T."/>
            <person name="Szyperski T."/>
        </authorList>
    </citation>
    <scope>STRUCTURE BY NMR</scope>
</reference>
<name>YVYC_BACSU</name>
<protein>
    <recommendedName>
        <fullName>Uncharacterized protein YvyC</fullName>
    </recommendedName>
    <alternativeName>
        <fullName>ORF 99</fullName>
    </alternativeName>
</protein>
<accession>P39737</accession>